<reference key="1">
    <citation type="journal article" date="1971" name="FEBS Lett.">
        <title>The amino acid sequence of cytochrome c551.5 (cytochrome c-7) from the green photosynthetic bacterium Chloropseudomonas ethylica.</title>
        <authorList>
            <person name="Ambler R.P."/>
        </authorList>
    </citation>
    <scope>PROTEIN SEQUENCE</scope>
</reference>
<reference key="2">
    <citation type="journal article" date="1998" name="Appl. Environ. Microbiol.">
        <title>The Desulfuromonas acetoxidans triheme cytochrome c7 produced in Desulfovibrio desulfuricans retains its metal reductase activity.</title>
        <authorList>
            <person name="Aubert C."/>
            <person name="Lojou E."/>
            <person name="Bianco P."/>
            <person name="Rousset M."/>
            <person name="Durand M.C."/>
            <person name="Bruschi M."/>
            <person name="Dolla A."/>
        </authorList>
    </citation>
    <scope>NUCLEOTIDE SEQUENCE [GENOMIC DNA]</scope>
</reference>
<reference key="3">
    <citation type="journal article" date="1997" name="Eur. J. Biochem.">
        <title>Assignment of the ligand geometry and redox potentials of the trihaem ferricytochrome c3 from Desulfuromonas acetoxidans.</title>
        <authorList>
            <person name="Turner D.L."/>
            <person name="Costa H.S."/>
            <person name="Coutinho I.B."/>
            <person name="Legall J."/>
            <person name="Xavier A.V."/>
        </authorList>
    </citation>
    <scope>CHARACTERIZATION</scope>
</reference>
<reference key="4">
    <citation type="journal article" date="2002" name="Proc. Natl. Acad. Sci. U.S.A.">
        <title>The metal reductase activity of some multiheme cytochromes c: NMR structural characterization of the reduction of chromium(VI) to chromium(III) by cytochrome c7.</title>
        <authorList>
            <person name="Assfalg M."/>
            <person name="Bertini I."/>
            <person name="Bruschi M."/>
            <person name="Michel C."/>
            <person name="Turano P."/>
        </authorList>
    </citation>
    <scope>STRUCTURE BY NMR</scope>
    <scope>FUNCTION AS A METAL REDUCTASE</scope>
</reference>
<reference key="5">
    <citation type="journal article" date="2001" name="Acta Crystallogr. D">
        <title>Structure of cytochrome c7 from Desulfuromonas acetoxidans at 1.9 A resolution.</title>
        <authorList>
            <person name="Czjzek M."/>
            <person name="Arnoux P."/>
            <person name="Haser R."/>
            <person name="Shepard W."/>
        </authorList>
    </citation>
    <scope>X-RAY CRYSTALLOGRAPHY (1.9 ANGSTROMS)</scope>
</reference>
<reference key="6">
    <citation type="journal article" date="1996" name="Proc. Natl. Acad. Sci. U.S.A.">
        <title>NMR characterization and solution structure determination of the oxidized cytochrome c7 from Desulfuromonas acetoxidans.</title>
        <authorList>
            <person name="Banci L."/>
            <person name="Bertini I."/>
            <person name="Bruschi M."/>
            <person name="Sompornpisut P."/>
            <person name="Turano P."/>
        </authorList>
    </citation>
    <scope>STRUCTURE BY NMR</scope>
</reference>
<reference key="7">
    <citation type="journal article" date="1998" name="Eur. J. Biochem.">
        <title>800 MHz 1H NMR solution structure refinement of oxidized cytochrome c7 from Desulfuromonas acetoxidans.</title>
        <authorList>
            <person name="Assfalg M."/>
            <person name="Banci L."/>
            <person name="Bertini I."/>
            <person name="Bruschi M."/>
            <person name="Turano P."/>
        </authorList>
    </citation>
    <scope>STRUCTURE BY NMR</scope>
</reference>
<reference key="8">
    <citation type="journal article" date="1999" name="Eur. J. Biochem.">
        <title>A proton-NMR investigation of the fully reduced cytochrome c7 from Desulfuromonas acetoxidans: comparison between the reduced and the oxidized forms.</title>
        <authorList>
            <person name="Assfalg M."/>
            <person name="Banci L."/>
            <person name="Bertini I."/>
            <person name="Bruschi M."/>
            <person name="Giudici-Orticoni M.-T."/>
            <person name="Turano P."/>
        </authorList>
    </citation>
    <scope>STRUCTURE BY NMR</scope>
</reference>
<reference key="9">
    <citation type="journal article" date="2002" name="J. Biomol. NMR">
        <title>A quick solution structure determination of the fully oxidized double mutant K9-10A cytochrome c7 from Desulfuromonas acetoxidans and mechanistic implications.</title>
        <authorList>
            <person name="Assfalg M."/>
            <person name="Bertini I."/>
            <person name="Turano P."/>
            <person name="Bruschi M."/>
            <person name="Durand M.C."/>
            <person name="Giudici-Orticoni M.-T."/>
            <person name="Dolla A."/>
        </authorList>
    </citation>
    <scope>STRUCTURE BY NMR</scope>
</reference>
<feature type="chain" id="PRO_0000108364" description="Cytochrome c3">
    <location>
        <begin position="1"/>
        <end position="68"/>
    </location>
</feature>
<feature type="binding site" description="axial binding residue">
    <location>
        <position position="17"/>
    </location>
    <ligand>
        <name>heme</name>
        <dbReference type="ChEBI" id="CHEBI:30413"/>
        <label>1</label>
    </ligand>
    <ligandPart>
        <name>Fe</name>
        <dbReference type="ChEBI" id="CHEBI:18248"/>
    </ligandPart>
</feature>
<feature type="binding site" description="axial binding residue">
    <location>
        <position position="20"/>
    </location>
    <ligand>
        <name>heme</name>
        <dbReference type="ChEBI" id="CHEBI:30413"/>
        <label>2</label>
    </ligand>
    <ligandPart>
        <name>Fe</name>
        <dbReference type="ChEBI" id="CHEBI:18248"/>
    </ligandPart>
</feature>
<feature type="binding site" description="covalent">
    <location>
        <position position="26"/>
    </location>
    <ligand>
        <name>heme</name>
        <dbReference type="ChEBI" id="CHEBI:30413"/>
        <label>1</label>
    </ligand>
</feature>
<feature type="binding site" description="covalent">
    <location>
        <position position="29"/>
    </location>
    <ligand>
        <name>heme</name>
        <dbReference type="ChEBI" id="CHEBI:30413"/>
        <label>1</label>
    </ligand>
</feature>
<feature type="binding site" description="axial binding residue">
    <location>
        <position position="30"/>
    </location>
    <ligand>
        <name>heme</name>
        <dbReference type="ChEBI" id="CHEBI:30413"/>
        <label>1</label>
    </ligand>
    <ligandPart>
        <name>Fe</name>
        <dbReference type="ChEBI" id="CHEBI:18248"/>
    </ligandPart>
</feature>
<feature type="binding site" description="axial binding residue">
    <location>
        <position position="45"/>
    </location>
    <ligand>
        <name>heme</name>
        <dbReference type="ChEBI" id="CHEBI:30413"/>
        <label>3</label>
    </ligand>
    <ligandPart>
        <name>Fe</name>
        <dbReference type="ChEBI" id="CHEBI:18248"/>
    </ligandPart>
</feature>
<feature type="binding site" description="covalent">
    <location>
        <position position="49"/>
    </location>
    <ligand>
        <name>heme</name>
        <dbReference type="ChEBI" id="CHEBI:30413"/>
        <label>2</label>
    </ligand>
</feature>
<feature type="binding site" description="covalent">
    <location>
        <position position="52"/>
    </location>
    <ligand>
        <name>heme</name>
        <dbReference type="ChEBI" id="CHEBI:30413"/>
        <label>2</label>
    </ligand>
</feature>
<feature type="binding site" description="axial binding residue">
    <location>
        <position position="53"/>
    </location>
    <ligand>
        <name>heme</name>
        <dbReference type="ChEBI" id="CHEBI:30413"/>
        <label>2</label>
    </ligand>
    <ligandPart>
        <name>Fe</name>
        <dbReference type="ChEBI" id="CHEBI:18248"/>
    </ligandPart>
</feature>
<feature type="binding site" description="covalent">
    <location>
        <position position="62"/>
    </location>
    <ligand>
        <name>heme</name>
        <dbReference type="ChEBI" id="CHEBI:30413"/>
        <label>3</label>
    </ligand>
</feature>
<feature type="binding site" description="covalent">
    <location>
        <position position="65"/>
    </location>
    <ligand>
        <name>heme</name>
        <dbReference type="ChEBI" id="CHEBI:30413"/>
        <label>3</label>
    </ligand>
</feature>
<feature type="binding site" description="axial binding residue">
    <location>
        <position position="66"/>
    </location>
    <ligand>
        <name>heme</name>
        <dbReference type="ChEBI" id="CHEBI:30413"/>
        <label>3</label>
    </ligand>
    <ligandPart>
        <name>Fe</name>
        <dbReference type="ChEBI" id="CHEBI:18248"/>
    </ligandPart>
</feature>
<feature type="strand" evidence="3">
    <location>
        <begin position="3"/>
        <end position="6"/>
    </location>
</feature>
<feature type="strand" evidence="2">
    <location>
        <begin position="9"/>
        <end position="11"/>
    </location>
</feature>
<feature type="strand" evidence="3">
    <location>
        <begin position="13"/>
        <end position="16"/>
    </location>
</feature>
<feature type="helix" evidence="3">
    <location>
        <begin position="17"/>
        <end position="24"/>
    </location>
</feature>
<feature type="helix" evidence="3">
    <location>
        <begin position="26"/>
        <end position="28"/>
    </location>
</feature>
<feature type="strand" evidence="4">
    <location>
        <begin position="30"/>
        <end position="33"/>
    </location>
</feature>
<feature type="helix" evidence="3">
    <location>
        <begin position="41"/>
        <end position="44"/>
    </location>
</feature>
<feature type="turn" evidence="3">
    <location>
        <begin position="45"/>
        <end position="49"/>
    </location>
</feature>
<feature type="helix" evidence="3">
    <location>
        <begin position="50"/>
        <end position="53"/>
    </location>
</feature>
<feature type="strand" evidence="3">
    <location>
        <begin position="56"/>
        <end position="58"/>
    </location>
</feature>
<feature type="helix" evidence="3">
    <location>
        <begin position="62"/>
        <end position="65"/>
    </location>
</feature>
<organism>
    <name type="scientific">Desulfuromonas acetoxidans</name>
    <name type="common">Chloropseudomonas ethylica</name>
    <dbReference type="NCBI Taxonomy" id="891"/>
    <lineage>
        <taxon>Bacteria</taxon>
        <taxon>Pseudomonadati</taxon>
        <taxon>Thermodesulfobacteriota</taxon>
        <taxon>Desulfuromonadia</taxon>
        <taxon>Desulfuromonadales</taxon>
        <taxon>Desulfuromonadaceae</taxon>
        <taxon>Desulfuromonas</taxon>
    </lineage>
</organism>
<accession>P00137</accession>
<dbReference type="EMBL" id="AF005234">
    <property type="protein sequence ID" value="AAC46253.1"/>
    <property type="molecule type" value="Genomic_DNA"/>
</dbReference>
<dbReference type="PIR" id="A00130">
    <property type="entry name" value="CCDS7"/>
</dbReference>
<dbReference type="PDB" id="1EHJ">
    <property type="method" value="NMR"/>
    <property type="chains" value="A=1-68"/>
</dbReference>
<dbReference type="PDB" id="1F22">
    <property type="method" value="NMR"/>
    <property type="chains" value="A=1-68"/>
</dbReference>
<dbReference type="PDB" id="1HH5">
    <property type="method" value="X-ray"/>
    <property type="resolution" value="1.90 A"/>
    <property type="chains" value="A=1-68"/>
</dbReference>
<dbReference type="PDB" id="1KWJ">
    <property type="method" value="NMR"/>
    <property type="chains" value="A=1-68"/>
</dbReference>
<dbReference type="PDB" id="1L3O">
    <property type="method" value="NMR"/>
    <property type="chains" value="A=1-68"/>
</dbReference>
<dbReference type="PDB" id="1LM2">
    <property type="method" value="NMR"/>
    <property type="chains" value="A=1-68"/>
</dbReference>
<dbReference type="PDB" id="1NEW">
    <property type="method" value="NMR"/>
    <property type="chains" value="A=1-68"/>
</dbReference>
<dbReference type="PDBsum" id="1EHJ"/>
<dbReference type="PDBsum" id="1F22"/>
<dbReference type="PDBsum" id="1HH5"/>
<dbReference type="PDBsum" id="1KWJ"/>
<dbReference type="PDBsum" id="1L3O"/>
<dbReference type="PDBsum" id="1LM2"/>
<dbReference type="PDBsum" id="1NEW"/>
<dbReference type="BMRB" id="P00137"/>
<dbReference type="SMR" id="P00137"/>
<dbReference type="DrugBank" id="DB03317">
    <property type="generic name" value="Ferroheme C"/>
</dbReference>
<dbReference type="EvolutionaryTrace" id="P00137"/>
<dbReference type="GO" id="GO:0009055">
    <property type="term" value="F:electron transfer activity"/>
    <property type="evidence" value="ECO:0007669"/>
    <property type="project" value="InterPro"/>
</dbReference>
<dbReference type="GO" id="GO:0020037">
    <property type="term" value="F:heme binding"/>
    <property type="evidence" value="ECO:0007669"/>
    <property type="project" value="InterPro"/>
</dbReference>
<dbReference type="GO" id="GO:0046872">
    <property type="term" value="F:metal ion binding"/>
    <property type="evidence" value="ECO:0007669"/>
    <property type="project" value="UniProtKB-KW"/>
</dbReference>
<dbReference type="GO" id="GO:0009061">
    <property type="term" value="P:anaerobic respiration"/>
    <property type="evidence" value="ECO:0007669"/>
    <property type="project" value="UniProtKB-KW"/>
</dbReference>
<dbReference type="Gene3D" id="3.90.10.10">
    <property type="entry name" value="Cytochrome C3"/>
    <property type="match status" value="1"/>
</dbReference>
<dbReference type="InterPro" id="IPR002322">
    <property type="entry name" value="Cyt_c_III"/>
</dbReference>
<dbReference type="InterPro" id="IPR036280">
    <property type="entry name" value="Multihaem_cyt_sf"/>
</dbReference>
<dbReference type="PRINTS" id="PR00609">
    <property type="entry name" value="CYTOCHROMEC3"/>
</dbReference>
<dbReference type="SUPFAM" id="SSF48695">
    <property type="entry name" value="Multiheme cytochromes"/>
    <property type="match status" value="1"/>
</dbReference>
<sequence>ADVVTYENKKGNVTFDHKAHAEKLGCDACHEGTPAKIAIDKKSAHKDACKTCHKSNNGPTKCGGCHIK</sequence>
<proteinExistence type="evidence at protein level"/>
<evidence type="ECO:0000269" key="1">
    <source>
    </source>
</evidence>
<evidence type="ECO:0007829" key="2">
    <source>
        <dbReference type="PDB" id="1EHJ"/>
    </source>
</evidence>
<evidence type="ECO:0007829" key="3">
    <source>
        <dbReference type="PDB" id="1HH5"/>
    </source>
</evidence>
<evidence type="ECO:0007829" key="4">
    <source>
        <dbReference type="PDB" id="1KWJ"/>
    </source>
</evidence>
<name>CYC3_DESAC</name>
<protein>
    <recommendedName>
        <fullName>Cytochrome c3</fullName>
    </recommendedName>
    <alternativeName>
        <fullName>Cytochrome c551.5</fullName>
    </alternativeName>
    <alternativeName>
        <fullName>Cytochrome c7</fullName>
    </alternativeName>
</protein>
<comment type="function">
    <text evidence="1">Participates in sulfate respiration coupled with phosphorylation by transferring electrons from the enzyme dehydrogenase to ferredoxin.</text>
</comment>
<comment type="biophysicochemical properties">
    <redoxPotential>
        <text>E(0) are -140 mV, -210 mV and -240 mV.</text>
    </redoxPotential>
</comment>
<comment type="PTM">
    <text>Binds 3 heme groups per subunit.</text>
</comment>
<gene>
    <name type="primary">cyd</name>
</gene>
<keyword id="KW-0002">3D-structure</keyword>
<keyword id="KW-0903">Direct protein sequencing</keyword>
<keyword id="KW-0249">Electron transport</keyword>
<keyword id="KW-0349">Heme</keyword>
<keyword id="KW-0408">Iron</keyword>
<keyword id="KW-0479">Metal-binding</keyword>
<keyword id="KW-0763">Sulfate respiration</keyword>
<keyword id="KW-0813">Transport</keyword>